<proteinExistence type="evidence at transcript level"/>
<protein>
    <recommendedName>
        <fullName>Cell division control protein 2 homolog B</fullName>
        <ecNumber>2.7.11.22</ecNumber>
        <ecNumber>2.7.11.23</ecNumber>
    </recommendedName>
</protein>
<name>CDC2B_ANTMA</name>
<evidence type="ECO:0000250" key="1"/>
<evidence type="ECO:0000255" key="2">
    <source>
        <dbReference type="PROSITE-ProRule" id="PRU00159"/>
    </source>
</evidence>
<evidence type="ECO:0000255" key="3">
    <source>
        <dbReference type="PROSITE-ProRule" id="PRU10027"/>
    </source>
</evidence>
<evidence type="ECO:0000305" key="4"/>
<organism>
    <name type="scientific">Antirrhinum majus</name>
    <name type="common">Garden snapdragon</name>
    <dbReference type="NCBI Taxonomy" id="4151"/>
    <lineage>
        <taxon>Eukaryota</taxon>
        <taxon>Viridiplantae</taxon>
        <taxon>Streptophyta</taxon>
        <taxon>Embryophyta</taxon>
        <taxon>Tracheophyta</taxon>
        <taxon>Spermatophyta</taxon>
        <taxon>Magnoliopsida</taxon>
        <taxon>eudicotyledons</taxon>
        <taxon>Gunneridae</taxon>
        <taxon>Pentapetalae</taxon>
        <taxon>asterids</taxon>
        <taxon>lamiids</taxon>
        <taxon>Lamiales</taxon>
        <taxon>Plantaginaceae</taxon>
        <taxon>Antirrhineae</taxon>
        <taxon>Antirrhinum</taxon>
    </lineage>
</organism>
<gene>
    <name type="primary">CDC2B</name>
</gene>
<sequence length="280" mass="32167">AYGVVYKARDIETNEDIALKKIRLEQEDEGVPSTAIREISLLKEMHHENIVNLKDVVHREKRLYLVFEYLDLDLKKHMDSCPEFSQDLHMVKMFLCQILRGVAYCHSHRVLHRDLKPQNLLIDRGSNTIKLADFGLARAFGIPVRTFTHEVVTLWYRAPEVLLGSRHYSTPVDVWSVGCIFAEMVNQKPLFPGDSEIDELHKIFRIIGTPNEDIWPGVTSLPDFKSSFPKWPPKELATIVPNLGATGLDLLCKMLQLDPSKRITAKKALEHEYFKDIVLP</sequence>
<dbReference type="EC" id="2.7.11.22"/>
<dbReference type="EC" id="2.7.11.23"/>
<dbReference type="EMBL" id="X97638">
    <property type="protein sequence ID" value="CAA66234.1"/>
    <property type="molecule type" value="mRNA"/>
</dbReference>
<dbReference type="PIR" id="T17116">
    <property type="entry name" value="T17116"/>
</dbReference>
<dbReference type="SMR" id="Q38773"/>
<dbReference type="GO" id="GO:0000307">
    <property type="term" value="C:cyclin-dependent protein kinase holoenzyme complex"/>
    <property type="evidence" value="ECO:0007669"/>
    <property type="project" value="TreeGrafter"/>
</dbReference>
<dbReference type="GO" id="GO:0005737">
    <property type="term" value="C:cytoplasm"/>
    <property type="evidence" value="ECO:0007669"/>
    <property type="project" value="TreeGrafter"/>
</dbReference>
<dbReference type="GO" id="GO:0005634">
    <property type="term" value="C:nucleus"/>
    <property type="evidence" value="ECO:0007669"/>
    <property type="project" value="TreeGrafter"/>
</dbReference>
<dbReference type="GO" id="GO:0005524">
    <property type="term" value="F:ATP binding"/>
    <property type="evidence" value="ECO:0007669"/>
    <property type="project" value="UniProtKB-KW"/>
</dbReference>
<dbReference type="GO" id="GO:0030332">
    <property type="term" value="F:cyclin binding"/>
    <property type="evidence" value="ECO:0007669"/>
    <property type="project" value="TreeGrafter"/>
</dbReference>
<dbReference type="GO" id="GO:0004693">
    <property type="term" value="F:cyclin-dependent protein serine/threonine kinase activity"/>
    <property type="evidence" value="ECO:0007669"/>
    <property type="project" value="UniProtKB-EC"/>
</dbReference>
<dbReference type="GO" id="GO:0106310">
    <property type="term" value="F:protein serine kinase activity"/>
    <property type="evidence" value="ECO:0007669"/>
    <property type="project" value="RHEA"/>
</dbReference>
<dbReference type="GO" id="GO:0008353">
    <property type="term" value="F:RNA polymerase II CTD heptapeptide repeat kinase activity"/>
    <property type="evidence" value="ECO:0007669"/>
    <property type="project" value="UniProtKB-EC"/>
</dbReference>
<dbReference type="GO" id="GO:0051301">
    <property type="term" value="P:cell division"/>
    <property type="evidence" value="ECO:0007669"/>
    <property type="project" value="UniProtKB-KW"/>
</dbReference>
<dbReference type="GO" id="GO:0000082">
    <property type="term" value="P:G1/S transition of mitotic cell cycle"/>
    <property type="evidence" value="ECO:0007669"/>
    <property type="project" value="TreeGrafter"/>
</dbReference>
<dbReference type="GO" id="GO:0010389">
    <property type="term" value="P:regulation of G2/M transition of mitotic cell cycle"/>
    <property type="evidence" value="ECO:0007669"/>
    <property type="project" value="TreeGrafter"/>
</dbReference>
<dbReference type="GO" id="GO:0051445">
    <property type="term" value="P:regulation of meiotic cell cycle"/>
    <property type="evidence" value="ECO:0007669"/>
    <property type="project" value="TreeGrafter"/>
</dbReference>
<dbReference type="GO" id="GO:0007165">
    <property type="term" value="P:signal transduction"/>
    <property type="evidence" value="ECO:0007669"/>
    <property type="project" value="TreeGrafter"/>
</dbReference>
<dbReference type="CDD" id="cd07835">
    <property type="entry name" value="STKc_CDK1_CdkB_like"/>
    <property type="match status" value="1"/>
</dbReference>
<dbReference type="FunFam" id="1.10.510.10:FF:000280">
    <property type="entry name" value="Cell division control protein 2 homolog"/>
    <property type="match status" value="1"/>
</dbReference>
<dbReference type="FunFam" id="3.30.200.20:FF:000375">
    <property type="entry name" value="Cell division related protein kinase 2"/>
    <property type="match status" value="1"/>
</dbReference>
<dbReference type="Gene3D" id="3.30.200.20">
    <property type="entry name" value="Phosphorylase Kinase, domain 1"/>
    <property type="match status" value="1"/>
</dbReference>
<dbReference type="Gene3D" id="1.10.510.10">
    <property type="entry name" value="Transferase(Phosphotransferase) domain 1"/>
    <property type="match status" value="1"/>
</dbReference>
<dbReference type="InterPro" id="IPR050108">
    <property type="entry name" value="CDK"/>
</dbReference>
<dbReference type="InterPro" id="IPR011009">
    <property type="entry name" value="Kinase-like_dom_sf"/>
</dbReference>
<dbReference type="InterPro" id="IPR000719">
    <property type="entry name" value="Prot_kinase_dom"/>
</dbReference>
<dbReference type="InterPro" id="IPR008271">
    <property type="entry name" value="Ser/Thr_kinase_AS"/>
</dbReference>
<dbReference type="PANTHER" id="PTHR24056">
    <property type="entry name" value="CELL DIVISION PROTEIN KINASE"/>
    <property type="match status" value="1"/>
</dbReference>
<dbReference type="PANTHER" id="PTHR24056:SF548">
    <property type="entry name" value="CYCLIN-DEPENDENT KINASE A-1"/>
    <property type="match status" value="1"/>
</dbReference>
<dbReference type="Pfam" id="PF00069">
    <property type="entry name" value="Pkinase"/>
    <property type="match status" value="1"/>
</dbReference>
<dbReference type="SMART" id="SM00220">
    <property type="entry name" value="S_TKc"/>
    <property type="match status" value="1"/>
</dbReference>
<dbReference type="SUPFAM" id="SSF56112">
    <property type="entry name" value="Protein kinase-like (PK-like)"/>
    <property type="match status" value="1"/>
</dbReference>
<dbReference type="PROSITE" id="PS50011">
    <property type="entry name" value="PROTEIN_KINASE_DOM"/>
    <property type="match status" value="1"/>
</dbReference>
<dbReference type="PROSITE" id="PS00108">
    <property type="entry name" value="PROTEIN_KINASE_ST"/>
    <property type="match status" value="1"/>
</dbReference>
<reference key="1">
    <citation type="journal article" date="1996" name="Plant Cell">
        <title>Distinct classes of cdc2-related genes are differentially expressed during the cell division cycle in plants.</title>
        <authorList>
            <person name="Fobert P.R."/>
            <person name="Gaudin V."/>
            <person name="Lunness P."/>
            <person name="Coen E.S."/>
            <person name="Doonan J.H."/>
        </authorList>
    </citation>
    <scope>NUCLEOTIDE SEQUENCE [MRNA]</scope>
    <source>
        <tissue>Flower</tissue>
    </source>
</reference>
<feature type="chain" id="PRO_0000085746" description="Cell division control protein 2 homolog B">
    <location>
        <begin position="1" status="less than"/>
        <end position="280"/>
    </location>
</feature>
<feature type="domain" description="Protein kinase" evidence="2">
    <location>
        <begin position="1" status="less than"/>
        <end position="274"/>
    </location>
</feature>
<feature type="active site" description="Proton acceptor" evidence="2 3">
    <location>
        <position position="114"/>
    </location>
</feature>
<feature type="binding site" evidence="2">
    <location>
        <begin position="1" status="less than"/>
        <end position="5"/>
    </location>
    <ligand>
        <name>ATP</name>
        <dbReference type="ChEBI" id="CHEBI:30616"/>
    </ligand>
</feature>
<feature type="binding site" evidence="2">
    <location>
        <position position="20"/>
    </location>
    <ligand>
        <name>ATP</name>
        <dbReference type="ChEBI" id="CHEBI:30616"/>
    </ligand>
</feature>
<feature type="modified residue" description="Phosphotyrosine" evidence="1">
    <location>
        <position position="2"/>
    </location>
</feature>
<feature type="modified residue" description="Phosphothreonine; by CAK" evidence="1">
    <location>
        <position position="148"/>
    </location>
</feature>
<feature type="non-terminal residue">
    <location>
        <position position="1"/>
    </location>
</feature>
<comment type="function">
    <text>Plays a key role in the control of the eukaryotic cell cycle.</text>
</comment>
<comment type="catalytic activity">
    <reaction>
        <text>L-seryl-[protein] + ATP = O-phospho-L-seryl-[protein] + ADP + H(+)</text>
        <dbReference type="Rhea" id="RHEA:17989"/>
        <dbReference type="Rhea" id="RHEA-COMP:9863"/>
        <dbReference type="Rhea" id="RHEA-COMP:11604"/>
        <dbReference type="ChEBI" id="CHEBI:15378"/>
        <dbReference type="ChEBI" id="CHEBI:29999"/>
        <dbReference type="ChEBI" id="CHEBI:30616"/>
        <dbReference type="ChEBI" id="CHEBI:83421"/>
        <dbReference type="ChEBI" id="CHEBI:456216"/>
        <dbReference type="EC" id="2.7.11.22"/>
    </reaction>
</comment>
<comment type="catalytic activity">
    <reaction>
        <text>L-threonyl-[protein] + ATP = O-phospho-L-threonyl-[protein] + ADP + H(+)</text>
        <dbReference type="Rhea" id="RHEA:46608"/>
        <dbReference type="Rhea" id="RHEA-COMP:11060"/>
        <dbReference type="Rhea" id="RHEA-COMP:11605"/>
        <dbReference type="ChEBI" id="CHEBI:15378"/>
        <dbReference type="ChEBI" id="CHEBI:30013"/>
        <dbReference type="ChEBI" id="CHEBI:30616"/>
        <dbReference type="ChEBI" id="CHEBI:61977"/>
        <dbReference type="ChEBI" id="CHEBI:456216"/>
        <dbReference type="EC" id="2.7.11.22"/>
    </reaction>
</comment>
<comment type="catalytic activity">
    <reaction>
        <text>[DNA-directed RNA polymerase] + ATP = phospho-[DNA-directed RNA polymerase] + ADP + H(+)</text>
        <dbReference type="Rhea" id="RHEA:10216"/>
        <dbReference type="Rhea" id="RHEA-COMP:11321"/>
        <dbReference type="Rhea" id="RHEA-COMP:11322"/>
        <dbReference type="ChEBI" id="CHEBI:15378"/>
        <dbReference type="ChEBI" id="CHEBI:30616"/>
        <dbReference type="ChEBI" id="CHEBI:43176"/>
        <dbReference type="ChEBI" id="CHEBI:68546"/>
        <dbReference type="ChEBI" id="CHEBI:456216"/>
        <dbReference type="EC" id="2.7.11.23"/>
    </reaction>
</comment>
<comment type="activity regulation">
    <text evidence="1">Phosphorylation at Tyr-2 inactivates the enzyme, while phosphorylation at Thr-148 activates it.</text>
</comment>
<comment type="similarity">
    <text evidence="4">Belongs to the protein kinase superfamily. CMGC Ser/Thr protein kinase family. CDC2/CDKX subfamily.</text>
</comment>
<keyword id="KW-0067">ATP-binding</keyword>
<keyword id="KW-0131">Cell cycle</keyword>
<keyword id="KW-0132">Cell division</keyword>
<keyword id="KW-0418">Kinase</keyword>
<keyword id="KW-0498">Mitosis</keyword>
<keyword id="KW-0547">Nucleotide-binding</keyword>
<keyword id="KW-0597">Phosphoprotein</keyword>
<keyword id="KW-0723">Serine/threonine-protein kinase</keyword>
<keyword id="KW-0808">Transferase</keyword>
<accession>Q38773</accession>